<organism>
    <name type="scientific">Mycobacterium tuberculosis (strain CDC 1551 / Oshkosh)</name>
    <dbReference type="NCBI Taxonomy" id="83331"/>
    <lineage>
        <taxon>Bacteria</taxon>
        <taxon>Bacillati</taxon>
        <taxon>Actinomycetota</taxon>
        <taxon>Actinomycetes</taxon>
        <taxon>Mycobacteriales</taxon>
        <taxon>Mycobacteriaceae</taxon>
        <taxon>Mycobacterium</taxon>
        <taxon>Mycobacterium tuberculosis complex</taxon>
    </lineage>
</organism>
<feature type="chain" id="PRO_0000427432" description="Uncharacterized protein MT1872">
    <location>
        <begin position="1"/>
        <end position="121"/>
    </location>
</feature>
<feature type="transmembrane region" description="Helical" evidence="1">
    <location>
        <begin position="12"/>
        <end position="32"/>
    </location>
</feature>
<feature type="transmembrane region" description="Helical" evidence="1">
    <location>
        <begin position="35"/>
        <end position="55"/>
    </location>
</feature>
<feature type="transmembrane region" description="Helical" evidence="1">
    <location>
        <begin position="67"/>
        <end position="87"/>
    </location>
</feature>
<accession>P9WLR6</accession>
<accession>L0TAI1</accession>
<accession>P64893</accession>
<accession>Q50609</accession>
<protein>
    <recommendedName>
        <fullName>Uncharacterized protein MT1872</fullName>
    </recommendedName>
</protein>
<sequence>MGSDTAWSPARMIGIAALAVGIVLGLVFHPGVPEVIQPYLPIAVVAALDAVFGGLRAYLERIFDPKVFVVSFVFNVLVAALIVYVGDQLGVGTQLSTAIIVVLGIRIFGNTAALRRRLFGA</sequence>
<reference key="1">
    <citation type="journal article" date="2002" name="J. Bacteriol.">
        <title>Whole-genome comparison of Mycobacterium tuberculosis clinical and laboratory strains.</title>
        <authorList>
            <person name="Fleischmann R.D."/>
            <person name="Alland D."/>
            <person name="Eisen J.A."/>
            <person name="Carpenter L."/>
            <person name="White O."/>
            <person name="Peterson J.D."/>
            <person name="DeBoy R.T."/>
            <person name="Dodson R.J."/>
            <person name="Gwinn M.L."/>
            <person name="Haft D.H."/>
            <person name="Hickey E.K."/>
            <person name="Kolonay J.F."/>
            <person name="Nelson W.C."/>
            <person name="Umayam L.A."/>
            <person name="Ermolaeva M.D."/>
            <person name="Salzberg S.L."/>
            <person name="Delcher A."/>
            <person name="Utterback T.R."/>
            <person name="Weidman J.F."/>
            <person name="Khouri H.M."/>
            <person name="Gill J."/>
            <person name="Mikula A."/>
            <person name="Bishai W."/>
            <person name="Jacobs W.R. Jr."/>
            <person name="Venter J.C."/>
            <person name="Fraser C.M."/>
        </authorList>
    </citation>
    <scope>NUCLEOTIDE SEQUENCE [LARGE SCALE GENOMIC DNA]</scope>
    <source>
        <strain>CDC 1551 / Oshkosh</strain>
    </source>
</reference>
<name>Y1824_MYCTO</name>
<gene>
    <name type="ordered locus">MT1872</name>
</gene>
<dbReference type="EMBL" id="AE000516">
    <property type="protein sequence ID" value="AAK46145.1"/>
    <property type="molecule type" value="Genomic_DNA"/>
</dbReference>
<dbReference type="PIR" id="A70721">
    <property type="entry name" value="A70721"/>
</dbReference>
<dbReference type="RefSeq" id="WP_003899037.1">
    <property type="nucleotide sequence ID" value="NZ_KK341227.1"/>
</dbReference>
<dbReference type="KEGG" id="mtc:MT1872"/>
<dbReference type="PATRIC" id="fig|83331.31.peg.2016"/>
<dbReference type="HOGENOM" id="CLU_135532_0_0_11"/>
<dbReference type="Proteomes" id="UP000001020">
    <property type="component" value="Chromosome"/>
</dbReference>
<dbReference type="GO" id="GO:0005886">
    <property type="term" value="C:plasma membrane"/>
    <property type="evidence" value="ECO:0007669"/>
    <property type="project" value="UniProtKB-SubCell"/>
</dbReference>
<dbReference type="InterPro" id="IPR009709">
    <property type="entry name" value="DUF1290"/>
</dbReference>
<dbReference type="Pfam" id="PF06947">
    <property type="entry name" value="DUF1290"/>
    <property type="match status" value="1"/>
</dbReference>
<dbReference type="PIRSF" id="PIRSF018579">
    <property type="entry name" value="Sbp"/>
    <property type="match status" value="1"/>
</dbReference>
<comment type="subcellular location">
    <subcellularLocation>
        <location evidence="2">Cell membrane</location>
        <topology evidence="2">Multi-pass membrane protein</topology>
    </subcellularLocation>
</comment>
<comment type="similarity">
    <text evidence="2">Belongs to the sbp family.</text>
</comment>
<keyword id="KW-1003">Cell membrane</keyword>
<keyword id="KW-0472">Membrane</keyword>
<keyword id="KW-1185">Reference proteome</keyword>
<keyword id="KW-0812">Transmembrane</keyword>
<keyword id="KW-1133">Transmembrane helix</keyword>
<proteinExistence type="inferred from homology"/>
<evidence type="ECO:0000255" key="1"/>
<evidence type="ECO:0000305" key="2"/>